<proteinExistence type="inferred from homology"/>
<evidence type="ECO:0000255" key="1">
    <source>
        <dbReference type="HAMAP-Rule" id="MF_01927"/>
    </source>
</evidence>
<evidence type="ECO:0000256" key="2">
    <source>
        <dbReference type="SAM" id="MobiDB-lite"/>
    </source>
</evidence>
<name>PURU_MYCTO</name>
<protein>
    <recommendedName>
        <fullName evidence="1">Formyltetrahydrofolate deformylase</fullName>
        <ecNumber evidence="1">3.5.1.10</ecNumber>
    </recommendedName>
    <alternativeName>
        <fullName evidence="1">Formyl-FH(4) hydrolase</fullName>
    </alternativeName>
</protein>
<gene>
    <name evidence="1" type="primary">purU</name>
    <name type="ordered locus">MT3041</name>
</gene>
<accession>P9WHM2</accession>
<accession>L0TDX0</accession>
<accession>P0A5T6</accession>
<accession>Q50453</accession>
<comment type="function">
    <text evidence="1">Catalyzes the hydrolysis of 10-formyltetrahydrofolate (formyl-FH4) to formate and tetrahydrofolate (FH4).</text>
</comment>
<comment type="catalytic activity">
    <reaction evidence="1">
        <text>(6R)-10-formyltetrahydrofolate + H2O = (6S)-5,6,7,8-tetrahydrofolate + formate + H(+)</text>
        <dbReference type="Rhea" id="RHEA:19833"/>
        <dbReference type="ChEBI" id="CHEBI:15377"/>
        <dbReference type="ChEBI" id="CHEBI:15378"/>
        <dbReference type="ChEBI" id="CHEBI:15740"/>
        <dbReference type="ChEBI" id="CHEBI:57453"/>
        <dbReference type="ChEBI" id="CHEBI:195366"/>
        <dbReference type="EC" id="3.5.1.10"/>
    </reaction>
</comment>
<comment type="pathway">
    <text evidence="1">Purine metabolism; IMP biosynthesis via de novo pathway; formate from 10-formyl-5,6,7,8-tetrahydrofolate: step 1/1.</text>
</comment>
<comment type="similarity">
    <text evidence="1">Belongs to the PurU family.</text>
</comment>
<reference key="1">
    <citation type="journal article" date="2002" name="J. Bacteriol.">
        <title>Whole-genome comparison of Mycobacterium tuberculosis clinical and laboratory strains.</title>
        <authorList>
            <person name="Fleischmann R.D."/>
            <person name="Alland D."/>
            <person name="Eisen J.A."/>
            <person name="Carpenter L."/>
            <person name="White O."/>
            <person name="Peterson J.D."/>
            <person name="DeBoy R.T."/>
            <person name="Dodson R.J."/>
            <person name="Gwinn M.L."/>
            <person name="Haft D.H."/>
            <person name="Hickey E.K."/>
            <person name="Kolonay J.F."/>
            <person name="Nelson W.C."/>
            <person name="Umayam L.A."/>
            <person name="Ermolaeva M.D."/>
            <person name="Salzberg S.L."/>
            <person name="Delcher A."/>
            <person name="Utterback T.R."/>
            <person name="Weidman J.F."/>
            <person name="Khouri H.M."/>
            <person name="Gill J."/>
            <person name="Mikula A."/>
            <person name="Bishai W."/>
            <person name="Jacobs W.R. Jr."/>
            <person name="Venter J.C."/>
            <person name="Fraser C.M."/>
        </authorList>
    </citation>
    <scope>NUCLEOTIDE SEQUENCE [LARGE SCALE GENOMIC DNA]</scope>
    <source>
        <strain>CDC 1551 / Oshkosh</strain>
    </source>
</reference>
<sequence length="310" mass="34006">MGKGSMTAHATPNEPDYPPPPGGPPPPADIGRLLLRCHDRPGIIAAVSTFLARAGANIISLDQHSTAPEGGTFLQRAIFHLPGLTAAVDELQRDFGSTVADKFGIDYRFAEAAKPKRVAIMASTEDHCLLDLLWRNRRGELEMSVVMVIANHPDLAAHVRPFGVPFIHIPATRDTRTEAEQRQLQLLSGNVDLVVLARYMQILSPGFLEAIGCPLINIHHSFLPAFTGAAPYQRARERGVKLIGATAHYVTEVLDEGPIIEQDVVRVDHTHTVDDLVRVGADVERAVLSRAVLWHCQDRVIVHHNQTIVF</sequence>
<feature type="chain" id="PRO_0000428160" description="Formyltetrahydrofolate deformylase">
    <location>
        <begin position="1"/>
        <end position="310"/>
    </location>
</feature>
<feature type="domain" description="ACT" evidence="1">
    <location>
        <begin position="32"/>
        <end position="108"/>
    </location>
</feature>
<feature type="region of interest" description="Disordered" evidence="2">
    <location>
        <begin position="1"/>
        <end position="30"/>
    </location>
</feature>
<feature type="compositionally biased region" description="Pro residues" evidence="2">
    <location>
        <begin position="15"/>
        <end position="28"/>
    </location>
</feature>
<feature type="active site" evidence="1">
    <location>
        <position position="255"/>
    </location>
</feature>
<keyword id="KW-0378">Hydrolase</keyword>
<keyword id="KW-0554">One-carbon metabolism</keyword>
<keyword id="KW-0658">Purine biosynthesis</keyword>
<keyword id="KW-1185">Reference proteome</keyword>
<organism>
    <name type="scientific">Mycobacterium tuberculosis (strain CDC 1551 / Oshkosh)</name>
    <dbReference type="NCBI Taxonomy" id="83331"/>
    <lineage>
        <taxon>Bacteria</taxon>
        <taxon>Bacillati</taxon>
        <taxon>Actinomycetota</taxon>
        <taxon>Actinomycetes</taxon>
        <taxon>Mycobacteriales</taxon>
        <taxon>Mycobacteriaceae</taxon>
        <taxon>Mycobacterium</taxon>
        <taxon>Mycobacterium tuberculosis complex</taxon>
    </lineage>
</organism>
<dbReference type="EC" id="3.5.1.10" evidence="1"/>
<dbReference type="EMBL" id="AE000516">
    <property type="protein sequence ID" value="AAK47366.1"/>
    <property type="molecule type" value="Genomic_DNA"/>
</dbReference>
<dbReference type="PIR" id="A70671">
    <property type="entry name" value="A70671"/>
</dbReference>
<dbReference type="RefSeq" id="WP_003899559.1">
    <property type="nucleotide sequence ID" value="NZ_KK341227.1"/>
</dbReference>
<dbReference type="SMR" id="P9WHM2"/>
<dbReference type="GeneID" id="45426952"/>
<dbReference type="KEGG" id="mtc:MT3041"/>
<dbReference type="PATRIC" id="fig|83331.31.peg.3281"/>
<dbReference type="HOGENOM" id="CLU_038395_3_0_11"/>
<dbReference type="UniPathway" id="UPA00074">
    <property type="reaction ID" value="UER00170"/>
</dbReference>
<dbReference type="Proteomes" id="UP000001020">
    <property type="component" value="Chromosome"/>
</dbReference>
<dbReference type="GO" id="GO:0008864">
    <property type="term" value="F:formyltetrahydrofolate deformylase activity"/>
    <property type="evidence" value="ECO:0007669"/>
    <property type="project" value="UniProtKB-UniRule"/>
</dbReference>
<dbReference type="GO" id="GO:0006189">
    <property type="term" value="P:'de novo' IMP biosynthetic process"/>
    <property type="evidence" value="ECO:0007669"/>
    <property type="project" value="UniProtKB-UniRule"/>
</dbReference>
<dbReference type="GO" id="GO:0006730">
    <property type="term" value="P:one-carbon metabolic process"/>
    <property type="evidence" value="ECO:0007669"/>
    <property type="project" value="UniProtKB-KW"/>
</dbReference>
<dbReference type="CDD" id="cd04875">
    <property type="entry name" value="ACT_F4HF-DF"/>
    <property type="match status" value="1"/>
</dbReference>
<dbReference type="CDD" id="cd08648">
    <property type="entry name" value="FMT_core_Formyl-FH4-Hydrolase_C"/>
    <property type="match status" value="1"/>
</dbReference>
<dbReference type="Gene3D" id="3.30.70.260">
    <property type="match status" value="1"/>
</dbReference>
<dbReference type="Gene3D" id="3.40.50.170">
    <property type="entry name" value="Formyl transferase, N-terminal domain"/>
    <property type="match status" value="1"/>
</dbReference>
<dbReference type="HAMAP" id="MF_01927">
    <property type="entry name" value="PurU"/>
    <property type="match status" value="1"/>
</dbReference>
<dbReference type="InterPro" id="IPR045865">
    <property type="entry name" value="ACT-like_dom_sf"/>
</dbReference>
<dbReference type="InterPro" id="IPR002912">
    <property type="entry name" value="ACT_dom"/>
</dbReference>
<dbReference type="InterPro" id="IPR041729">
    <property type="entry name" value="Formyl-FH4-Hydrolase_C"/>
</dbReference>
<dbReference type="InterPro" id="IPR002376">
    <property type="entry name" value="Formyl_transf_N"/>
</dbReference>
<dbReference type="InterPro" id="IPR036477">
    <property type="entry name" value="Formyl_transf_N_sf"/>
</dbReference>
<dbReference type="InterPro" id="IPR004810">
    <property type="entry name" value="PurU"/>
</dbReference>
<dbReference type="InterPro" id="IPR044074">
    <property type="entry name" value="PurU_ACT"/>
</dbReference>
<dbReference type="NCBIfam" id="NF004684">
    <property type="entry name" value="PRK06027.1"/>
    <property type="match status" value="1"/>
</dbReference>
<dbReference type="NCBIfam" id="TIGR00655">
    <property type="entry name" value="PurU"/>
    <property type="match status" value="1"/>
</dbReference>
<dbReference type="PANTHER" id="PTHR42706">
    <property type="entry name" value="FORMYLTETRAHYDROFOLATE DEFORMYLASE"/>
    <property type="match status" value="1"/>
</dbReference>
<dbReference type="PANTHER" id="PTHR42706:SF1">
    <property type="entry name" value="FORMYLTETRAHYDROFOLATE DEFORMYLASE 2, MITOCHONDRIAL"/>
    <property type="match status" value="1"/>
</dbReference>
<dbReference type="Pfam" id="PF01842">
    <property type="entry name" value="ACT"/>
    <property type="match status" value="1"/>
</dbReference>
<dbReference type="Pfam" id="PF00551">
    <property type="entry name" value="Formyl_trans_N"/>
    <property type="match status" value="1"/>
</dbReference>
<dbReference type="PIRSF" id="PIRSF036480">
    <property type="entry name" value="FormyFH4_hydr"/>
    <property type="match status" value="1"/>
</dbReference>
<dbReference type="PRINTS" id="PR01575">
    <property type="entry name" value="FFH4HYDRLASE"/>
</dbReference>
<dbReference type="SUPFAM" id="SSF55021">
    <property type="entry name" value="ACT-like"/>
    <property type="match status" value="1"/>
</dbReference>
<dbReference type="SUPFAM" id="SSF53328">
    <property type="entry name" value="Formyltransferase"/>
    <property type="match status" value="1"/>
</dbReference>
<dbReference type="PROSITE" id="PS51671">
    <property type="entry name" value="ACT"/>
    <property type="match status" value="1"/>
</dbReference>